<name>TRPR_ECODH</name>
<accession>B1XFK3</accession>
<evidence type="ECO:0000255" key="1">
    <source>
        <dbReference type="HAMAP-Rule" id="MF_00475"/>
    </source>
</evidence>
<dbReference type="EMBL" id="CP000948">
    <property type="protein sequence ID" value="ACB05321.1"/>
    <property type="molecule type" value="Genomic_DNA"/>
</dbReference>
<dbReference type="RefSeq" id="WP_000068679.1">
    <property type="nucleotide sequence ID" value="NC_010473.1"/>
</dbReference>
<dbReference type="SMR" id="B1XFK3"/>
<dbReference type="GeneID" id="93777452"/>
<dbReference type="KEGG" id="ecd:ECDH10B_4551"/>
<dbReference type="HOGENOM" id="CLU_147939_0_0_6"/>
<dbReference type="GO" id="GO:0005737">
    <property type="term" value="C:cytoplasm"/>
    <property type="evidence" value="ECO:0007669"/>
    <property type="project" value="UniProtKB-SubCell"/>
</dbReference>
<dbReference type="GO" id="GO:0003700">
    <property type="term" value="F:DNA-binding transcription factor activity"/>
    <property type="evidence" value="ECO:0007669"/>
    <property type="project" value="InterPro"/>
</dbReference>
<dbReference type="GO" id="GO:0043565">
    <property type="term" value="F:sequence-specific DNA binding"/>
    <property type="evidence" value="ECO:0007669"/>
    <property type="project" value="InterPro"/>
</dbReference>
<dbReference type="GO" id="GO:0045892">
    <property type="term" value="P:negative regulation of DNA-templated transcription"/>
    <property type="evidence" value="ECO:0007669"/>
    <property type="project" value="UniProtKB-UniRule"/>
</dbReference>
<dbReference type="FunFam" id="1.10.1270.10:FF:000001">
    <property type="entry name" value="Trp operon repressor"/>
    <property type="match status" value="1"/>
</dbReference>
<dbReference type="Gene3D" id="1.10.1270.10">
    <property type="entry name" value="TrpR-like"/>
    <property type="match status" value="1"/>
</dbReference>
<dbReference type="HAMAP" id="MF_00475">
    <property type="entry name" value="Trp_repressor"/>
    <property type="match status" value="1"/>
</dbReference>
<dbReference type="InterPro" id="IPR000831">
    <property type="entry name" value="Trp_repress"/>
</dbReference>
<dbReference type="InterPro" id="IPR013335">
    <property type="entry name" value="Trp_repress_bac"/>
</dbReference>
<dbReference type="InterPro" id="IPR010921">
    <property type="entry name" value="Trp_repressor/repl_initiator"/>
</dbReference>
<dbReference type="InterPro" id="IPR038116">
    <property type="entry name" value="TrpR-like_sf"/>
</dbReference>
<dbReference type="NCBIfam" id="TIGR01321">
    <property type="entry name" value="TrpR"/>
    <property type="match status" value="1"/>
</dbReference>
<dbReference type="PANTHER" id="PTHR38025">
    <property type="entry name" value="TRP OPERON REPRESSOR"/>
    <property type="match status" value="1"/>
</dbReference>
<dbReference type="PANTHER" id="PTHR38025:SF1">
    <property type="entry name" value="TRP OPERON REPRESSOR"/>
    <property type="match status" value="1"/>
</dbReference>
<dbReference type="Pfam" id="PF01371">
    <property type="entry name" value="Trp_repressor"/>
    <property type="match status" value="1"/>
</dbReference>
<dbReference type="PIRSF" id="PIRSF003196">
    <property type="entry name" value="Trp_repressor"/>
    <property type="match status" value="1"/>
</dbReference>
<dbReference type="SUPFAM" id="SSF48295">
    <property type="entry name" value="TrpR-like"/>
    <property type="match status" value="1"/>
</dbReference>
<gene>
    <name evidence="1" type="primary">trpR</name>
    <name type="ordered locus">ECDH10B_4551</name>
</gene>
<comment type="function">
    <text evidence="1">This protein is an aporepressor. When complexed with L-tryptophan it binds the operator region of the trp operon (5'-ACTAGT-'3') and prevents the initiation of transcription. The complex also regulates trp repressor biosynthesis by binding to its regulatory region.</text>
</comment>
<comment type="subunit">
    <text evidence="1">Homodimer.</text>
</comment>
<comment type="subcellular location">
    <subcellularLocation>
        <location evidence="1">Cytoplasm</location>
    </subcellularLocation>
</comment>
<comment type="similarity">
    <text evidence="1">Belongs to the TrpR family.</text>
</comment>
<keyword id="KW-0963">Cytoplasm</keyword>
<keyword id="KW-0238">DNA-binding</keyword>
<keyword id="KW-0678">Repressor</keyword>
<keyword id="KW-0804">Transcription</keyword>
<keyword id="KW-0805">Transcription regulation</keyword>
<sequence>MAQQSPYSAAMAEQRHQEWLRFVDLLKNAYQNDLHLPLLNLMLTPDEREALGTRVRIVEELLRGEMSQRELKNELGAGIATITRGSNSLKAAPVELRQWLEEVLLKSD</sequence>
<protein>
    <recommendedName>
        <fullName evidence="1">Trp operon repressor</fullName>
    </recommendedName>
</protein>
<organism>
    <name type="scientific">Escherichia coli (strain K12 / DH10B)</name>
    <dbReference type="NCBI Taxonomy" id="316385"/>
    <lineage>
        <taxon>Bacteria</taxon>
        <taxon>Pseudomonadati</taxon>
        <taxon>Pseudomonadota</taxon>
        <taxon>Gammaproteobacteria</taxon>
        <taxon>Enterobacterales</taxon>
        <taxon>Enterobacteriaceae</taxon>
        <taxon>Escherichia</taxon>
    </lineage>
</organism>
<reference key="1">
    <citation type="journal article" date="2008" name="J. Bacteriol.">
        <title>The complete genome sequence of Escherichia coli DH10B: insights into the biology of a laboratory workhorse.</title>
        <authorList>
            <person name="Durfee T."/>
            <person name="Nelson R."/>
            <person name="Baldwin S."/>
            <person name="Plunkett G. III"/>
            <person name="Burland V."/>
            <person name="Mau B."/>
            <person name="Petrosino J.F."/>
            <person name="Qin X."/>
            <person name="Muzny D.M."/>
            <person name="Ayele M."/>
            <person name="Gibbs R.A."/>
            <person name="Csorgo B."/>
            <person name="Posfai G."/>
            <person name="Weinstock G.M."/>
            <person name="Blattner F.R."/>
        </authorList>
    </citation>
    <scope>NUCLEOTIDE SEQUENCE [LARGE SCALE GENOMIC DNA]</scope>
    <source>
        <strain>K12 / DH10B</strain>
    </source>
</reference>
<proteinExistence type="inferred from homology"/>
<feature type="chain" id="PRO_1000197141" description="Trp operon repressor">
    <location>
        <begin position="1"/>
        <end position="108"/>
    </location>
</feature>
<feature type="DNA-binding region" evidence="1">
    <location>
        <begin position="68"/>
        <end position="91"/>
    </location>
</feature>